<reference key="1">
    <citation type="journal article" date="2001" name="Lancet">
        <title>Whole genome sequencing of meticillin-resistant Staphylococcus aureus.</title>
        <authorList>
            <person name="Kuroda M."/>
            <person name="Ohta T."/>
            <person name="Uchiyama I."/>
            <person name="Baba T."/>
            <person name="Yuzawa H."/>
            <person name="Kobayashi I."/>
            <person name="Cui L."/>
            <person name="Oguchi A."/>
            <person name="Aoki K."/>
            <person name="Nagai Y."/>
            <person name="Lian J.-Q."/>
            <person name="Ito T."/>
            <person name="Kanamori M."/>
            <person name="Matsumaru H."/>
            <person name="Maruyama A."/>
            <person name="Murakami H."/>
            <person name="Hosoyama A."/>
            <person name="Mizutani-Ui Y."/>
            <person name="Takahashi N.K."/>
            <person name="Sawano T."/>
            <person name="Inoue R."/>
            <person name="Kaito C."/>
            <person name="Sekimizu K."/>
            <person name="Hirakawa H."/>
            <person name="Kuhara S."/>
            <person name="Goto S."/>
            <person name="Yabuzaki J."/>
            <person name="Kanehisa M."/>
            <person name="Yamashita A."/>
            <person name="Oshima K."/>
            <person name="Furuya K."/>
            <person name="Yoshino C."/>
            <person name="Shiba T."/>
            <person name="Hattori M."/>
            <person name="Ogasawara N."/>
            <person name="Hayashi H."/>
            <person name="Hiramatsu K."/>
        </authorList>
    </citation>
    <scope>NUCLEOTIDE SEQUENCE [LARGE SCALE GENOMIC DNA]</scope>
    <source>
        <strain>N315</strain>
    </source>
</reference>
<sequence length="351" mass="39482">MKLAIKEIMFYKFRYILITLIILLLSIMVLFISGLAQGLGRENISLFEHFDNDEYVVQKMKEPQIEKSQLSDTQQNQIKKVIHQEPYKMNIQTLKLSNKEQDVITMNDVKQQRIQLKKGDYPKNAHEVAINDKLAADNIRVGDRLHFKNNSTSYRVSGILNDTMYAHSSIVLLNDNGFNALNKVNTAFYPVKNLTQQQRDELNKINDVQVVSEKDLTGNIASYQAEQAPLNMMIVSLFAITAIVLSAFFYVMTIQKISQIGILKAIGIKTRHLLSALVLQILTLTIIGVGIAVIIIVGLSFMMPVTMPFYLTTQNILLMVGIFILVAILGASLSFIKLFKVDPIEAIGGAE</sequence>
<feature type="chain" id="PRO_0000270525" description="Putative hemin transport system permease protein HrtB">
    <location>
        <begin position="1"/>
        <end position="351"/>
    </location>
</feature>
<feature type="transmembrane region" description="Helical" evidence="2">
    <location>
        <begin position="16"/>
        <end position="36"/>
    </location>
</feature>
<feature type="transmembrane region" description="Helical" evidence="2">
    <location>
        <begin position="234"/>
        <end position="254"/>
    </location>
</feature>
<feature type="transmembrane region" description="Helical" evidence="2">
    <location>
        <begin position="281"/>
        <end position="301"/>
    </location>
</feature>
<feature type="transmembrane region" description="Helical" evidence="2">
    <location>
        <begin position="316"/>
        <end position="336"/>
    </location>
</feature>
<comment type="function">
    <text evidence="1">Part of the ABC transporter complex hrt involved in hemin import. Responsible for the translocation of the substrate across the membrane (By similarity).</text>
</comment>
<comment type="subunit">
    <text evidence="1">The complex is composed of two ATP-binding proteins (HrtA), two transmembrane proteins (HrtB) and a solute-binding protein.</text>
</comment>
<comment type="subcellular location">
    <subcellularLocation>
        <location evidence="3">Cell membrane</location>
        <topology evidence="3">Multi-pass membrane protein</topology>
    </subcellularLocation>
</comment>
<comment type="similarity">
    <text evidence="3">Belongs to the ABC-4 integral membrane protein family. HrtB subfamily.</text>
</comment>
<evidence type="ECO:0000250" key="1"/>
<evidence type="ECO:0000255" key="2"/>
<evidence type="ECO:0000305" key="3"/>
<organism>
    <name type="scientific">Staphylococcus aureus (strain N315)</name>
    <dbReference type="NCBI Taxonomy" id="158879"/>
    <lineage>
        <taxon>Bacteria</taxon>
        <taxon>Bacillati</taxon>
        <taxon>Bacillota</taxon>
        <taxon>Bacilli</taxon>
        <taxon>Bacillales</taxon>
        <taxon>Staphylococcaceae</taxon>
        <taxon>Staphylococcus</taxon>
    </lineage>
</organism>
<protein>
    <recommendedName>
        <fullName>Putative hemin transport system permease protein HrtB</fullName>
    </recommendedName>
</protein>
<proteinExistence type="inferred from homology"/>
<accession>Q7A3X2</accession>
<keyword id="KW-1003">Cell membrane</keyword>
<keyword id="KW-0472">Membrane</keyword>
<keyword id="KW-0812">Transmembrane</keyword>
<keyword id="KW-1133">Transmembrane helix</keyword>
<keyword id="KW-0813">Transport</keyword>
<dbReference type="EMBL" id="BA000018">
    <property type="protein sequence ID" value="BAB43452.1"/>
    <property type="molecule type" value="Genomic_DNA"/>
</dbReference>
<dbReference type="PIR" id="C90036">
    <property type="entry name" value="C90036"/>
</dbReference>
<dbReference type="RefSeq" id="WP_000761395.1">
    <property type="nucleotide sequence ID" value="NC_002745.2"/>
</dbReference>
<dbReference type="SMR" id="Q7A3X2"/>
<dbReference type="TCDB" id="3.A.1.122.4">
    <property type="family name" value="the atp-binding cassette (abc) superfamily"/>
</dbReference>
<dbReference type="EnsemblBacteria" id="BAB43452">
    <property type="protein sequence ID" value="BAB43452"/>
    <property type="gene ID" value="BAB43452"/>
</dbReference>
<dbReference type="KEGG" id="sau:SA2150"/>
<dbReference type="HOGENOM" id="CLU_060907_1_0_9"/>
<dbReference type="GO" id="GO:0005886">
    <property type="term" value="C:plasma membrane"/>
    <property type="evidence" value="ECO:0007669"/>
    <property type="project" value="UniProtKB-SubCell"/>
</dbReference>
<dbReference type="InterPro" id="IPR051125">
    <property type="entry name" value="ABC-4/HrtB_transporter"/>
</dbReference>
<dbReference type="InterPro" id="IPR003838">
    <property type="entry name" value="ABC3_permease_C"/>
</dbReference>
<dbReference type="PANTHER" id="PTHR43738">
    <property type="entry name" value="ABC TRANSPORTER, MEMBRANE PROTEIN"/>
    <property type="match status" value="1"/>
</dbReference>
<dbReference type="PANTHER" id="PTHR43738:SF1">
    <property type="entry name" value="HEMIN TRANSPORT SYSTEM PERMEASE PROTEIN HRTB-RELATED"/>
    <property type="match status" value="1"/>
</dbReference>
<dbReference type="Pfam" id="PF02687">
    <property type="entry name" value="FtsX"/>
    <property type="match status" value="1"/>
</dbReference>
<name>HRTB_STAAN</name>
<gene>
    <name type="primary">hrtB</name>
    <name type="ordered locus">SA2150</name>
</gene>